<accession>Q5LH51</accession>
<name>NUOH_BACFN</name>
<organism>
    <name type="scientific">Bacteroides fragilis (strain ATCC 25285 / DSM 2151 / CCUG 4856 / JCM 11019 / LMG 10263 / NCTC 9343 / Onslow / VPI 2553 / EN-2)</name>
    <dbReference type="NCBI Taxonomy" id="272559"/>
    <lineage>
        <taxon>Bacteria</taxon>
        <taxon>Pseudomonadati</taxon>
        <taxon>Bacteroidota</taxon>
        <taxon>Bacteroidia</taxon>
        <taxon>Bacteroidales</taxon>
        <taxon>Bacteroidaceae</taxon>
        <taxon>Bacteroides</taxon>
    </lineage>
</organism>
<gene>
    <name evidence="1" type="primary">nuoH</name>
    <name type="ordered locus">BF0789</name>
</gene>
<feature type="chain" id="PRO_0000244891" description="NADH-quinone oxidoreductase subunit H">
    <location>
        <begin position="1"/>
        <end position="358"/>
    </location>
</feature>
<feature type="transmembrane region" description="Helical" evidence="1">
    <location>
        <begin position="30"/>
        <end position="50"/>
    </location>
</feature>
<feature type="transmembrane region" description="Helical" evidence="1">
    <location>
        <begin position="96"/>
        <end position="116"/>
    </location>
</feature>
<feature type="transmembrane region" description="Helical" evidence="1">
    <location>
        <begin position="129"/>
        <end position="149"/>
    </location>
</feature>
<feature type="transmembrane region" description="Helical" evidence="1">
    <location>
        <begin position="168"/>
        <end position="188"/>
    </location>
</feature>
<feature type="transmembrane region" description="Helical" evidence="1">
    <location>
        <begin position="201"/>
        <end position="221"/>
    </location>
</feature>
<feature type="transmembrane region" description="Helical" evidence="1">
    <location>
        <begin position="265"/>
        <end position="285"/>
    </location>
</feature>
<feature type="transmembrane region" description="Helical" evidence="1">
    <location>
        <begin position="297"/>
        <end position="317"/>
    </location>
</feature>
<feature type="transmembrane region" description="Helical" evidence="1">
    <location>
        <begin position="336"/>
        <end position="356"/>
    </location>
</feature>
<comment type="function">
    <text evidence="1">NDH-1 shuttles electrons from NADH, via FMN and iron-sulfur (Fe-S) centers, to quinones in the respiratory chain. The immediate electron acceptor for the enzyme in this species is believed to be ubiquinone. Couples the redox reaction to proton translocation (for every two electrons transferred, four hydrogen ions are translocated across the cytoplasmic membrane), and thus conserves the redox energy in a proton gradient. This subunit may bind ubiquinone.</text>
</comment>
<comment type="catalytic activity">
    <reaction evidence="1">
        <text>a quinone + NADH + 5 H(+)(in) = a quinol + NAD(+) + 4 H(+)(out)</text>
        <dbReference type="Rhea" id="RHEA:57888"/>
        <dbReference type="ChEBI" id="CHEBI:15378"/>
        <dbReference type="ChEBI" id="CHEBI:24646"/>
        <dbReference type="ChEBI" id="CHEBI:57540"/>
        <dbReference type="ChEBI" id="CHEBI:57945"/>
        <dbReference type="ChEBI" id="CHEBI:132124"/>
    </reaction>
</comment>
<comment type="subunit">
    <text evidence="1">NDH-1 is composed of 14 different subunits. Subunits NuoA, H, J, K, L, M, N constitute the membrane sector of the complex.</text>
</comment>
<comment type="subcellular location">
    <subcellularLocation>
        <location evidence="1">Cell inner membrane</location>
        <topology evidence="1">Multi-pass membrane protein</topology>
    </subcellularLocation>
</comment>
<comment type="similarity">
    <text evidence="1">Belongs to the complex I subunit 1 family.</text>
</comment>
<dbReference type="EC" id="7.1.1.-" evidence="1"/>
<dbReference type="EMBL" id="CR626927">
    <property type="protein sequence ID" value="CAH06535.1"/>
    <property type="molecule type" value="Genomic_DNA"/>
</dbReference>
<dbReference type="RefSeq" id="WP_005785048.1">
    <property type="nucleotide sequence ID" value="NZ_UFTH01000001.1"/>
</dbReference>
<dbReference type="SMR" id="Q5LH51"/>
<dbReference type="PaxDb" id="272559-BF9343_0754"/>
<dbReference type="GeneID" id="60368202"/>
<dbReference type="KEGG" id="bfs:BF9343_0754"/>
<dbReference type="eggNOG" id="COG1005">
    <property type="taxonomic scope" value="Bacteria"/>
</dbReference>
<dbReference type="HOGENOM" id="CLU_015134_0_1_10"/>
<dbReference type="Proteomes" id="UP000006731">
    <property type="component" value="Chromosome"/>
</dbReference>
<dbReference type="GO" id="GO:0005886">
    <property type="term" value="C:plasma membrane"/>
    <property type="evidence" value="ECO:0007669"/>
    <property type="project" value="UniProtKB-SubCell"/>
</dbReference>
<dbReference type="GO" id="GO:0003954">
    <property type="term" value="F:NADH dehydrogenase activity"/>
    <property type="evidence" value="ECO:0007669"/>
    <property type="project" value="TreeGrafter"/>
</dbReference>
<dbReference type="GO" id="GO:0016655">
    <property type="term" value="F:oxidoreductase activity, acting on NAD(P)H, quinone or similar compound as acceptor"/>
    <property type="evidence" value="ECO:0007669"/>
    <property type="project" value="UniProtKB-UniRule"/>
</dbReference>
<dbReference type="GO" id="GO:0048038">
    <property type="term" value="F:quinone binding"/>
    <property type="evidence" value="ECO:0007669"/>
    <property type="project" value="UniProtKB-KW"/>
</dbReference>
<dbReference type="GO" id="GO:0009060">
    <property type="term" value="P:aerobic respiration"/>
    <property type="evidence" value="ECO:0007669"/>
    <property type="project" value="TreeGrafter"/>
</dbReference>
<dbReference type="HAMAP" id="MF_01350">
    <property type="entry name" value="NDH1_NuoH"/>
    <property type="match status" value="1"/>
</dbReference>
<dbReference type="InterPro" id="IPR001694">
    <property type="entry name" value="NADH_UbQ_OxRdtase_su1/FPO"/>
</dbReference>
<dbReference type="InterPro" id="IPR018086">
    <property type="entry name" value="NADH_UbQ_OxRdtase_su1_CS"/>
</dbReference>
<dbReference type="NCBIfam" id="NF004741">
    <property type="entry name" value="PRK06076.1-2"/>
    <property type="match status" value="1"/>
</dbReference>
<dbReference type="PANTHER" id="PTHR11432">
    <property type="entry name" value="NADH DEHYDROGENASE SUBUNIT 1"/>
    <property type="match status" value="1"/>
</dbReference>
<dbReference type="PANTHER" id="PTHR11432:SF3">
    <property type="entry name" value="NADH-UBIQUINONE OXIDOREDUCTASE CHAIN 1"/>
    <property type="match status" value="1"/>
</dbReference>
<dbReference type="Pfam" id="PF00146">
    <property type="entry name" value="NADHdh"/>
    <property type="match status" value="1"/>
</dbReference>
<dbReference type="PROSITE" id="PS00668">
    <property type="entry name" value="COMPLEX1_ND1_2"/>
    <property type="match status" value="1"/>
</dbReference>
<proteinExistence type="inferred from homology"/>
<evidence type="ECO:0000255" key="1">
    <source>
        <dbReference type="HAMAP-Rule" id="MF_01350"/>
    </source>
</evidence>
<sequence>MFDFSIITSWIHQTLTSVMPEGLAVFIECVVIGVCIVALYAILAILLIYMERKVCGFFQCRLGPNRVGKWGSIQVLCDVLKMLTKEIIELKHSDKFLYNLAPFMVIIASFLTFSCLPISKGLEVLDFNVGVFFLLAASSIGVVGILLAGWGSNNKFSLIGAMRSGAQIISYELSVGLSILTMVVLMGTMQFSEIVESQANGWFIFKGHIPALIAFVIYLIAGNAECNRGPFDLPEAESELTAGYHTEYSGMHFGFFYLAEYLNMFIVAAVAATIFLGGWMPLHIVGLDGFNAVMDYIPGFIWFFGKAFFVVFLLMWIKWTFPRLRIDQILNLEWKYLVPISMVNLVIMVLIVVFGLHF</sequence>
<reference key="1">
    <citation type="journal article" date="2005" name="Science">
        <title>Extensive DNA inversions in the B. fragilis genome control variable gene expression.</title>
        <authorList>
            <person name="Cerdeno-Tarraga A.-M."/>
            <person name="Patrick S."/>
            <person name="Crossman L.C."/>
            <person name="Blakely G."/>
            <person name="Abratt V."/>
            <person name="Lennard N."/>
            <person name="Poxton I."/>
            <person name="Duerden B."/>
            <person name="Harris B."/>
            <person name="Quail M.A."/>
            <person name="Barron A."/>
            <person name="Clark L."/>
            <person name="Corton C."/>
            <person name="Doggett J."/>
            <person name="Holden M.T.G."/>
            <person name="Larke N."/>
            <person name="Line A."/>
            <person name="Lord A."/>
            <person name="Norbertczak H."/>
            <person name="Ormond D."/>
            <person name="Price C."/>
            <person name="Rabbinowitsch E."/>
            <person name="Woodward J."/>
            <person name="Barrell B.G."/>
            <person name="Parkhill J."/>
        </authorList>
    </citation>
    <scope>NUCLEOTIDE SEQUENCE [LARGE SCALE GENOMIC DNA]</scope>
    <source>
        <strain>ATCC 25285 / DSM 2151 / CCUG 4856 / JCM 11019 / LMG 10263 / NCTC 9343 / Onslow / VPI 2553 / EN-2</strain>
    </source>
</reference>
<keyword id="KW-0997">Cell inner membrane</keyword>
<keyword id="KW-1003">Cell membrane</keyword>
<keyword id="KW-0472">Membrane</keyword>
<keyword id="KW-0520">NAD</keyword>
<keyword id="KW-0874">Quinone</keyword>
<keyword id="KW-1278">Translocase</keyword>
<keyword id="KW-0812">Transmembrane</keyword>
<keyword id="KW-1133">Transmembrane helix</keyword>
<keyword id="KW-0830">Ubiquinone</keyword>
<protein>
    <recommendedName>
        <fullName evidence="1">NADH-quinone oxidoreductase subunit H</fullName>
        <ecNumber evidence="1">7.1.1.-</ecNumber>
    </recommendedName>
    <alternativeName>
        <fullName evidence="1">NADH dehydrogenase I subunit H</fullName>
    </alternativeName>
    <alternativeName>
        <fullName evidence="1">NDH-1 subunit H</fullName>
    </alternativeName>
</protein>